<feature type="transit peptide" description="Chloroplast" evidence="2">
    <location>
        <begin position="1"/>
        <end status="unknown"/>
    </location>
</feature>
<feature type="chain" id="PRO_0000019408" description="Ferredoxin--NADP reductase, chloroplastic">
    <location>
        <begin status="unknown"/>
        <end position="365"/>
    </location>
</feature>
<feature type="domain" description="FAD-binding FR-type" evidence="3">
    <location>
        <begin position="86"/>
        <end position="208"/>
    </location>
</feature>
<feature type="region of interest" description="Disordered" evidence="4">
    <location>
        <begin position="1"/>
        <end position="22"/>
    </location>
</feature>
<feature type="compositionally biased region" description="Polar residues" evidence="4">
    <location>
        <begin position="11"/>
        <end position="22"/>
    </location>
</feature>
<feature type="binding site" evidence="1">
    <location>
        <begin position="144"/>
        <end position="147"/>
    </location>
    <ligand>
        <name>FAD</name>
        <dbReference type="ChEBI" id="CHEBI:57692"/>
    </ligand>
</feature>
<feature type="binding site" evidence="1">
    <location>
        <position position="147"/>
    </location>
    <ligand>
        <name>NADP(+)</name>
        <dbReference type="ChEBI" id="CHEBI:58349"/>
    </ligand>
</feature>
<feature type="binding site" evidence="1">
    <location>
        <begin position="165"/>
        <end position="167"/>
    </location>
    <ligand>
        <name>FAD</name>
        <dbReference type="ChEBI" id="CHEBI:57692"/>
    </ligand>
</feature>
<feature type="binding site" evidence="1">
    <location>
        <position position="167"/>
    </location>
    <ligand>
        <name>NADP(+)</name>
        <dbReference type="ChEBI" id="CHEBI:58349"/>
    </ligand>
</feature>
<feature type="binding site" evidence="1">
    <location>
        <position position="171"/>
    </location>
    <ligand>
        <name>FAD</name>
        <dbReference type="ChEBI" id="CHEBI:57692"/>
    </ligand>
</feature>
<feature type="binding site" evidence="1">
    <location>
        <begin position="182"/>
        <end position="184"/>
    </location>
    <ligand>
        <name>FAD</name>
        <dbReference type="ChEBI" id="CHEBI:57692"/>
    </ligand>
</feature>
<feature type="binding site" evidence="1">
    <location>
        <position position="223"/>
    </location>
    <ligand>
        <name>FAD</name>
        <dbReference type="ChEBI" id="CHEBI:57692"/>
    </ligand>
</feature>
<feature type="binding site" evidence="1">
    <location>
        <position position="223"/>
    </location>
    <ligand>
        <name>NADP(+)</name>
        <dbReference type="ChEBI" id="CHEBI:58349"/>
    </ligand>
</feature>
<feature type="binding site" evidence="1">
    <location>
        <begin position="255"/>
        <end position="256"/>
    </location>
    <ligand>
        <name>NADP(+)</name>
        <dbReference type="ChEBI" id="CHEBI:58349"/>
    </ligand>
</feature>
<feature type="binding site" evidence="1">
    <location>
        <begin position="285"/>
        <end position="286"/>
    </location>
    <ligand>
        <name>NADP(+)</name>
        <dbReference type="ChEBI" id="CHEBI:58349"/>
    </ligand>
</feature>
<feature type="binding site" evidence="1">
    <location>
        <position position="295"/>
    </location>
    <ligand>
        <name>NADP(+)</name>
        <dbReference type="ChEBI" id="CHEBI:58349"/>
    </ligand>
</feature>
<feature type="binding site" evidence="1">
    <location>
        <begin position="324"/>
        <end position="325"/>
    </location>
    <ligand>
        <name>NADP(+)</name>
        <dbReference type="ChEBI" id="CHEBI:58349"/>
    </ligand>
</feature>
<feature type="binding site" evidence="1">
    <location>
        <position position="363"/>
    </location>
    <ligand>
        <name>NADP(+)</name>
        <dbReference type="ChEBI" id="CHEBI:58349"/>
    </ligand>
</feature>
<sequence length="365" mass="41063">MAAAVTAAVSFPSTKSTPLSTRTSSVITHEKINFNKVPLYYRNVSVGGKVGTIRAVASDVEAPVAKVEKHSKKMEEGVIVNKYKPKNPYTGRCLLNTKITGDDAPGETWHMVFSHEGEIPYREGQSVGVIPEGIDKNGKPHKLRLYSIASRPLGDFGDSKTVSLCVKRLIYTNDNGEIVKGVCSNFLCDLKPGSEVVLTGPVGKEMLMPKDPNATIIMLATGTGIAPFRSFLWKMFFEKHDDYKFNGLAWLFLGVPTSSSLLYKEEFEKMKEKAPENFRLDFAVSREQTNEKGEKMYIQTRMAQYDRELWELLKKDNTYVYMCGLKGMEKGIDDIMVSLAAEDGIDWFDYKKQLKKAEQWNVEVY</sequence>
<proteinExistence type="evidence at transcript level"/>
<keyword id="KW-0150">Chloroplast</keyword>
<keyword id="KW-0249">Electron transport</keyword>
<keyword id="KW-0274">FAD</keyword>
<keyword id="KW-0285">Flavoprotein</keyword>
<keyword id="KW-0472">Membrane</keyword>
<keyword id="KW-0521">NADP</keyword>
<keyword id="KW-0560">Oxidoreductase</keyword>
<keyword id="KW-0602">Photosynthesis</keyword>
<keyword id="KW-0934">Plastid</keyword>
<keyword id="KW-0793">Thylakoid</keyword>
<keyword id="KW-0809">Transit peptide</keyword>
<keyword id="KW-0813">Transport</keyword>
<accession>P41343</accession>
<evidence type="ECO:0000250" key="1"/>
<evidence type="ECO:0000255" key="2"/>
<evidence type="ECO:0000255" key="3">
    <source>
        <dbReference type="PROSITE-ProRule" id="PRU00716"/>
    </source>
</evidence>
<evidence type="ECO:0000256" key="4">
    <source>
        <dbReference type="SAM" id="MobiDB-lite"/>
    </source>
</evidence>
<evidence type="ECO:0000305" key="5"/>
<name>FENR_MESCR</name>
<comment type="function">
    <text>May play a key role in regulating the relative amounts of cyclic and non-cyclic electron flow to meet the demands of the plant for ATP and reducing power.</text>
</comment>
<comment type="catalytic activity">
    <reaction>
        <text>2 reduced [2Fe-2S]-[ferredoxin] + NADP(+) + H(+) = 2 oxidized [2Fe-2S]-[ferredoxin] + NADPH</text>
        <dbReference type="Rhea" id="RHEA:20125"/>
        <dbReference type="Rhea" id="RHEA-COMP:10000"/>
        <dbReference type="Rhea" id="RHEA-COMP:10001"/>
        <dbReference type="ChEBI" id="CHEBI:15378"/>
        <dbReference type="ChEBI" id="CHEBI:33737"/>
        <dbReference type="ChEBI" id="CHEBI:33738"/>
        <dbReference type="ChEBI" id="CHEBI:57783"/>
        <dbReference type="ChEBI" id="CHEBI:58349"/>
        <dbReference type="EC" id="1.18.1.2"/>
    </reaction>
</comment>
<comment type="cofactor">
    <cofactor>
        <name>FAD</name>
        <dbReference type="ChEBI" id="CHEBI:57692"/>
    </cofactor>
</comment>
<comment type="pathway">
    <text>Energy metabolism; photosynthesis.</text>
</comment>
<comment type="subcellular location">
    <subcellularLocation>
        <location>Plastid</location>
        <location>Chloroplast stroma</location>
    </subcellularLocation>
    <subcellularLocation>
        <location evidence="5">Plastid</location>
        <location evidence="5">Chloroplast thylakoid membrane</location>
        <topology evidence="5">Peripheral membrane protein</topology>
        <orientation evidence="5">Stromal side</orientation>
    </subcellularLocation>
    <text>In the vicinity of the photosystem I in the non-stacked and fringe portion of the membrane.</text>
</comment>
<comment type="similarity">
    <text evidence="5">Belongs to the ferredoxin--NADP reductase type 1 family.</text>
</comment>
<organism>
    <name type="scientific">Mesembryanthemum crystallinum</name>
    <name type="common">Common ice plant</name>
    <name type="synonym">Cryophytum crystallinum</name>
    <dbReference type="NCBI Taxonomy" id="3544"/>
    <lineage>
        <taxon>Eukaryota</taxon>
        <taxon>Viridiplantae</taxon>
        <taxon>Streptophyta</taxon>
        <taxon>Embryophyta</taxon>
        <taxon>Tracheophyta</taxon>
        <taxon>Spermatophyta</taxon>
        <taxon>Magnoliopsida</taxon>
        <taxon>eudicotyledons</taxon>
        <taxon>Gunneridae</taxon>
        <taxon>Pentapetalae</taxon>
        <taxon>Caryophyllales</taxon>
        <taxon>Aizoaceae</taxon>
        <taxon>Mesembryanthemum</taxon>
        <taxon>Mesembryanthemum subgen. Cryophytum</taxon>
    </lineage>
</organism>
<reference key="1">
    <citation type="journal article" date="1989" name="Plant Physiol.">
        <title>Expression during salt stress and nucleotide sequence of cDNA for ferredoxin-NADP+ reductase from Mesembryanthemum crystallinum.</title>
        <authorList>
            <person name="Michalowski C.B."/>
            <person name="Schmitt J.M."/>
            <person name="Bohnert H.J."/>
        </authorList>
    </citation>
    <scope>NUCLEOTIDE SEQUENCE [MRNA]</scope>
</reference>
<protein>
    <recommendedName>
        <fullName>Ferredoxin--NADP reductase, chloroplastic</fullName>
        <shortName>FNR</shortName>
        <ecNumber>1.18.1.2</ecNumber>
    </recommendedName>
</protein>
<dbReference type="EC" id="1.18.1.2"/>
<dbReference type="EMBL" id="M25528">
    <property type="protein sequence ID" value="AAA33029.1"/>
    <property type="molecule type" value="mRNA"/>
</dbReference>
<dbReference type="PIR" id="A44974">
    <property type="entry name" value="A44974"/>
</dbReference>
<dbReference type="SMR" id="P41343"/>
<dbReference type="UniPathway" id="UPA00091"/>
<dbReference type="GO" id="GO:0009570">
    <property type="term" value="C:chloroplast stroma"/>
    <property type="evidence" value="ECO:0007669"/>
    <property type="project" value="UniProtKB-SubCell"/>
</dbReference>
<dbReference type="GO" id="GO:0009535">
    <property type="term" value="C:chloroplast thylakoid membrane"/>
    <property type="evidence" value="ECO:0007669"/>
    <property type="project" value="UniProtKB-SubCell"/>
</dbReference>
<dbReference type="GO" id="GO:0004324">
    <property type="term" value="F:ferredoxin-NADP+ reductase activity"/>
    <property type="evidence" value="ECO:0007669"/>
    <property type="project" value="UniProtKB-EC"/>
</dbReference>
<dbReference type="GO" id="GO:0015979">
    <property type="term" value="P:photosynthesis"/>
    <property type="evidence" value="ECO:0007669"/>
    <property type="project" value="UniProtKB-UniPathway"/>
</dbReference>
<dbReference type="CDD" id="cd06208">
    <property type="entry name" value="CYPOR_like_FNR"/>
    <property type="match status" value="1"/>
</dbReference>
<dbReference type="FunFam" id="2.40.30.10:FF:000048">
    <property type="entry name" value="Ferredoxin--NADP reductase, chloroplastic"/>
    <property type="match status" value="1"/>
</dbReference>
<dbReference type="FunFam" id="3.40.50.80:FF:000008">
    <property type="entry name" value="Ferredoxin--NADP reductase, chloroplastic"/>
    <property type="match status" value="1"/>
</dbReference>
<dbReference type="Gene3D" id="3.40.50.80">
    <property type="entry name" value="Nucleotide-binding domain of ferredoxin-NADP reductase (FNR) module"/>
    <property type="match status" value="1"/>
</dbReference>
<dbReference type="Gene3D" id="2.40.30.10">
    <property type="entry name" value="Translation factors"/>
    <property type="match status" value="1"/>
</dbReference>
<dbReference type="InterPro" id="IPR017927">
    <property type="entry name" value="FAD-bd_FR_type"/>
</dbReference>
<dbReference type="InterPro" id="IPR001709">
    <property type="entry name" value="Flavoprot_Pyr_Nucl_cyt_Rdtase"/>
</dbReference>
<dbReference type="InterPro" id="IPR015701">
    <property type="entry name" value="FNR"/>
</dbReference>
<dbReference type="InterPro" id="IPR039261">
    <property type="entry name" value="FNR_nucleotide-bd"/>
</dbReference>
<dbReference type="InterPro" id="IPR035442">
    <property type="entry name" value="FNR_plant_Cyanobacteria"/>
</dbReference>
<dbReference type="InterPro" id="IPR001433">
    <property type="entry name" value="OxRdtase_FAD/NAD-bd"/>
</dbReference>
<dbReference type="InterPro" id="IPR017938">
    <property type="entry name" value="Riboflavin_synthase-like_b-brl"/>
</dbReference>
<dbReference type="PANTHER" id="PTHR43314">
    <property type="match status" value="1"/>
</dbReference>
<dbReference type="Pfam" id="PF00175">
    <property type="entry name" value="NAD_binding_1"/>
    <property type="match status" value="1"/>
</dbReference>
<dbReference type="PIRSF" id="PIRSF501178">
    <property type="entry name" value="FNR-PetH"/>
    <property type="match status" value="1"/>
</dbReference>
<dbReference type="PIRSF" id="PIRSF000361">
    <property type="entry name" value="Frd-NADP+_RD"/>
    <property type="match status" value="1"/>
</dbReference>
<dbReference type="PRINTS" id="PR00371">
    <property type="entry name" value="FPNCR"/>
</dbReference>
<dbReference type="SUPFAM" id="SSF52343">
    <property type="entry name" value="Ferredoxin reductase-like, C-terminal NADP-linked domain"/>
    <property type="match status" value="1"/>
</dbReference>
<dbReference type="SUPFAM" id="SSF63380">
    <property type="entry name" value="Riboflavin synthase domain-like"/>
    <property type="match status" value="1"/>
</dbReference>
<dbReference type="PROSITE" id="PS51384">
    <property type="entry name" value="FAD_FR"/>
    <property type="match status" value="1"/>
</dbReference>
<gene>
    <name type="primary">PETH</name>
    <name type="synonym">FNRA</name>
</gene>